<proteinExistence type="inferred from homology"/>
<protein>
    <recommendedName>
        <fullName evidence="1">Chaperonin GroEL</fullName>
        <ecNumber evidence="1">5.6.1.7</ecNumber>
    </recommendedName>
    <alternativeName>
        <fullName evidence="1">60 kDa chaperonin</fullName>
    </alternativeName>
    <alternativeName>
        <fullName evidence="1">Chaperonin-60</fullName>
        <shortName evidence="1">Cpn60</shortName>
    </alternativeName>
</protein>
<dbReference type="EC" id="5.6.1.7" evidence="1"/>
<dbReference type="EMBL" id="CP001348">
    <property type="protein sequence ID" value="ACL74777.1"/>
    <property type="molecule type" value="Genomic_DNA"/>
</dbReference>
<dbReference type="RefSeq" id="WP_012634840.1">
    <property type="nucleotide sequence ID" value="NC_011898.1"/>
</dbReference>
<dbReference type="SMR" id="B8I5W0"/>
<dbReference type="STRING" id="394503.Ccel_0392"/>
<dbReference type="KEGG" id="cce:Ccel_0392"/>
<dbReference type="eggNOG" id="COG0459">
    <property type="taxonomic scope" value="Bacteria"/>
</dbReference>
<dbReference type="HOGENOM" id="CLU_016503_3_0_9"/>
<dbReference type="OrthoDB" id="9766614at2"/>
<dbReference type="Proteomes" id="UP000001349">
    <property type="component" value="Chromosome"/>
</dbReference>
<dbReference type="GO" id="GO:0005737">
    <property type="term" value="C:cytoplasm"/>
    <property type="evidence" value="ECO:0007669"/>
    <property type="project" value="UniProtKB-SubCell"/>
</dbReference>
<dbReference type="GO" id="GO:0005524">
    <property type="term" value="F:ATP binding"/>
    <property type="evidence" value="ECO:0007669"/>
    <property type="project" value="UniProtKB-UniRule"/>
</dbReference>
<dbReference type="GO" id="GO:0140662">
    <property type="term" value="F:ATP-dependent protein folding chaperone"/>
    <property type="evidence" value="ECO:0007669"/>
    <property type="project" value="InterPro"/>
</dbReference>
<dbReference type="GO" id="GO:0016853">
    <property type="term" value="F:isomerase activity"/>
    <property type="evidence" value="ECO:0007669"/>
    <property type="project" value="UniProtKB-KW"/>
</dbReference>
<dbReference type="GO" id="GO:0051082">
    <property type="term" value="F:unfolded protein binding"/>
    <property type="evidence" value="ECO:0007669"/>
    <property type="project" value="UniProtKB-UniRule"/>
</dbReference>
<dbReference type="GO" id="GO:0042026">
    <property type="term" value="P:protein refolding"/>
    <property type="evidence" value="ECO:0007669"/>
    <property type="project" value="UniProtKB-UniRule"/>
</dbReference>
<dbReference type="CDD" id="cd03344">
    <property type="entry name" value="GroEL"/>
    <property type="match status" value="1"/>
</dbReference>
<dbReference type="FunFam" id="1.10.560.10:FF:000001">
    <property type="entry name" value="60 kDa chaperonin"/>
    <property type="match status" value="1"/>
</dbReference>
<dbReference type="FunFam" id="3.50.7.10:FF:000001">
    <property type="entry name" value="60 kDa chaperonin"/>
    <property type="match status" value="1"/>
</dbReference>
<dbReference type="Gene3D" id="3.50.7.10">
    <property type="entry name" value="GroEL"/>
    <property type="match status" value="1"/>
</dbReference>
<dbReference type="Gene3D" id="1.10.560.10">
    <property type="entry name" value="GroEL-like equatorial domain"/>
    <property type="match status" value="1"/>
</dbReference>
<dbReference type="Gene3D" id="3.30.260.10">
    <property type="entry name" value="TCP-1-like chaperonin intermediate domain"/>
    <property type="match status" value="1"/>
</dbReference>
<dbReference type="HAMAP" id="MF_00600">
    <property type="entry name" value="CH60"/>
    <property type="match status" value="1"/>
</dbReference>
<dbReference type="InterPro" id="IPR018370">
    <property type="entry name" value="Chaperonin_Cpn60_CS"/>
</dbReference>
<dbReference type="InterPro" id="IPR001844">
    <property type="entry name" value="Cpn60/GroEL"/>
</dbReference>
<dbReference type="InterPro" id="IPR002423">
    <property type="entry name" value="Cpn60/GroEL/TCP-1"/>
</dbReference>
<dbReference type="InterPro" id="IPR027409">
    <property type="entry name" value="GroEL-like_apical_dom_sf"/>
</dbReference>
<dbReference type="InterPro" id="IPR027413">
    <property type="entry name" value="GROEL-like_equatorial_sf"/>
</dbReference>
<dbReference type="InterPro" id="IPR027410">
    <property type="entry name" value="TCP-1-like_intermed_sf"/>
</dbReference>
<dbReference type="NCBIfam" id="TIGR02348">
    <property type="entry name" value="GroEL"/>
    <property type="match status" value="1"/>
</dbReference>
<dbReference type="NCBIfam" id="NF000592">
    <property type="entry name" value="PRK00013.1"/>
    <property type="match status" value="1"/>
</dbReference>
<dbReference type="NCBIfam" id="NF009487">
    <property type="entry name" value="PRK12849.1"/>
    <property type="match status" value="1"/>
</dbReference>
<dbReference type="NCBIfam" id="NF009488">
    <property type="entry name" value="PRK12850.1"/>
    <property type="match status" value="1"/>
</dbReference>
<dbReference type="NCBIfam" id="NF009489">
    <property type="entry name" value="PRK12851.1"/>
    <property type="match status" value="1"/>
</dbReference>
<dbReference type="PANTHER" id="PTHR45633">
    <property type="entry name" value="60 KDA HEAT SHOCK PROTEIN, MITOCHONDRIAL"/>
    <property type="match status" value="1"/>
</dbReference>
<dbReference type="Pfam" id="PF00118">
    <property type="entry name" value="Cpn60_TCP1"/>
    <property type="match status" value="1"/>
</dbReference>
<dbReference type="PRINTS" id="PR00298">
    <property type="entry name" value="CHAPERONIN60"/>
</dbReference>
<dbReference type="SUPFAM" id="SSF52029">
    <property type="entry name" value="GroEL apical domain-like"/>
    <property type="match status" value="1"/>
</dbReference>
<dbReference type="SUPFAM" id="SSF48592">
    <property type="entry name" value="GroEL equatorial domain-like"/>
    <property type="match status" value="1"/>
</dbReference>
<dbReference type="SUPFAM" id="SSF54849">
    <property type="entry name" value="GroEL-intermediate domain like"/>
    <property type="match status" value="1"/>
</dbReference>
<dbReference type="PROSITE" id="PS00296">
    <property type="entry name" value="CHAPERONINS_CPN60"/>
    <property type="match status" value="1"/>
</dbReference>
<sequence length="543" mass="58017">MAKEIKFGEEARRSLEKGVNQLADTVKVTLGPKGRNVVLDKKFGSPLITNDGVTIAKEVELEDKFENMGAQLVKEVATKTNDVAGDGTTTATLLAQAIIREGMKNVAAGANPMILKKGLQKAVDTAVAGIKENSRKVKGKEDIARVATISANEELIGTLIADAMEKVTNDGVITVEESKTMGTNLEVVEGMQFDRGYLSAYMVTDTDKMEAVLDDPYILITDKKLTNIQDLLPILEEIVKQGKKLLIIAEDIEGEALTTLILNKLRGTFVCVAVKAPGFGDRRKAMLQDIAILTGGEVITEELGLDLKETQITQLGKARQVIVQKENTIIVDGNGSAEDIKSRINSIKTQIEDTTSDFDREKLQERLAKLSGGVAVIQVGAATETEMKEKKLRIEDALAATRAAVEEGIVAGGGTAFINVIPEVAKLLESTSGDEKTGVQIILRALEEPVRQIAENAGLEGSVIVEKIKTSEKGMGFDALNEKYIDMIEGGIVDPAKVTRSALQNAVSVAAMVLTTESVVADKPEPEAPAVPAGMPGGMGGMY</sequence>
<name>CH60_RUMCH</name>
<gene>
    <name evidence="1" type="primary">groEL</name>
    <name evidence="1" type="synonym">groL</name>
    <name type="ordered locus">Ccel_0392</name>
</gene>
<feature type="chain" id="PRO_1000147025" description="Chaperonin GroEL">
    <location>
        <begin position="1"/>
        <end position="543"/>
    </location>
</feature>
<feature type="region of interest" description="Disordered" evidence="2">
    <location>
        <begin position="524"/>
        <end position="543"/>
    </location>
</feature>
<feature type="binding site" evidence="1">
    <location>
        <begin position="29"/>
        <end position="32"/>
    </location>
    <ligand>
        <name>ATP</name>
        <dbReference type="ChEBI" id="CHEBI:30616"/>
    </ligand>
</feature>
<feature type="binding site" evidence="1">
    <location>
        <begin position="86"/>
        <end position="90"/>
    </location>
    <ligand>
        <name>ATP</name>
        <dbReference type="ChEBI" id="CHEBI:30616"/>
    </ligand>
</feature>
<feature type="binding site" evidence="1">
    <location>
        <position position="413"/>
    </location>
    <ligand>
        <name>ATP</name>
        <dbReference type="ChEBI" id="CHEBI:30616"/>
    </ligand>
</feature>
<feature type="binding site" evidence="1">
    <location>
        <begin position="478"/>
        <end position="480"/>
    </location>
    <ligand>
        <name>ATP</name>
        <dbReference type="ChEBI" id="CHEBI:30616"/>
    </ligand>
</feature>
<feature type="binding site" evidence="1">
    <location>
        <position position="494"/>
    </location>
    <ligand>
        <name>ATP</name>
        <dbReference type="ChEBI" id="CHEBI:30616"/>
    </ligand>
</feature>
<reference key="1">
    <citation type="submission" date="2009-01" db="EMBL/GenBank/DDBJ databases">
        <title>Complete sequence of Clostridium cellulolyticum H10.</title>
        <authorList>
            <consortium name="US DOE Joint Genome Institute"/>
            <person name="Lucas S."/>
            <person name="Copeland A."/>
            <person name="Lapidus A."/>
            <person name="Glavina del Rio T."/>
            <person name="Dalin E."/>
            <person name="Tice H."/>
            <person name="Bruce D."/>
            <person name="Goodwin L."/>
            <person name="Pitluck S."/>
            <person name="Chertkov O."/>
            <person name="Saunders E."/>
            <person name="Brettin T."/>
            <person name="Detter J.C."/>
            <person name="Han C."/>
            <person name="Larimer F."/>
            <person name="Land M."/>
            <person name="Hauser L."/>
            <person name="Kyrpides N."/>
            <person name="Ivanova N."/>
            <person name="Zhou J."/>
            <person name="Richardson P."/>
        </authorList>
    </citation>
    <scope>NUCLEOTIDE SEQUENCE [LARGE SCALE GENOMIC DNA]</scope>
    <source>
        <strain>ATCC 35319 / DSM 5812 / JCM 6584 / H10</strain>
    </source>
</reference>
<accession>B8I5W0</accession>
<comment type="function">
    <text evidence="1">Together with its co-chaperonin GroES, plays an essential role in assisting protein folding. The GroEL-GroES system forms a nano-cage that allows encapsulation of the non-native substrate proteins and provides a physical environment optimized to promote and accelerate protein folding.</text>
</comment>
<comment type="catalytic activity">
    <reaction evidence="1">
        <text>ATP + H2O + a folded polypeptide = ADP + phosphate + an unfolded polypeptide.</text>
        <dbReference type="EC" id="5.6.1.7"/>
    </reaction>
</comment>
<comment type="subunit">
    <text evidence="1">Forms a cylinder of 14 subunits composed of two heptameric rings stacked back-to-back. Interacts with the co-chaperonin GroES.</text>
</comment>
<comment type="subcellular location">
    <subcellularLocation>
        <location evidence="1">Cytoplasm</location>
    </subcellularLocation>
</comment>
<comment type="similarity">
    <text evidence="1">Belongs to the chaperonin (HSP60) family.</text>
</comment>
<keyword id="KW-0067">ATP-binding</keyword>
<keyword id="KW-0143">Chaperone</keyword>
<keyword id="KW-0963">Cytoplasm</keyword>
<keyword id="KW-0413">Isomerase</keyword>
<keyword id="KW-0547">Nucleotide-binding</keyword>
<keyword id="KW-1185">Reference proteome</keyword>
<organism>
    <name type="scientific">Ruminiclostridium cellulolyticum (strain ATCC 35319 / DSM 5812 / JCM 6584 / H10)</name>
    <name type="common">Clostridium cellulolyticum</name>
    <dbReference type="NCBI Taxonomy" id="394503"/>
    <lineage>
        <taxon>Bacteria</taxon>
        <taxon>Bacillati</taxon>
        <taxon>Bacillota</taxon>
        <taxon>Clostridia</taxon>
        <taxon>Eubacteriales</taxon>
        <taxon>Oscillospiraceae</taxon>
        <taxon>Ruminiclostridium</taxon>
    </lineage>
</organism>
<evidence type="ECO:0000255" key="1">
    <source>
        <dbReference type="HAMAP-Rule" id="MF_00600"/>
    </source>
</evidence>
<evidence type="ECO:0000256" key="2">
    <source>
        <dbReference type="SAM" id="MobiDB-lite"/>
    </source>
</evidence>